<sequence length="410" mass="46880">MKHPIHVTSEIGELQTVLLKRPGKEVENLTPDYLQQLLFDDIPYLPIIQKEHDYFAQTLRNRGVEVLYLEKLAAEALVDKKLREEFVDRILKEGQADVNVAHQTLKEYLLSFSNEELIQKIMGGVRKNEIETSKKTHLYELMEDHYPFYLDPMPNLYFTRDPAASVGDGLTINKMREPARRRESLFMEYIIKYHPRFAKHNVPIWLDRDYKFPIEGGDELILNEETIAIGVSARTSAKAIERLAKNLFSRQNKIKKVLAIEIPKCRAFMHLDTVFTMVDYDKFTIHPAIQGPKGNMNIYILEKGSDEETLKITHRTSLMEALKEVLGLSELVLIPCGGGDVIASAREQWNDGSNTLAIAPGVVVTYDRNYVSNTLLREHGIEVIEVLSSELSRGRGGPRCMSMPIVRKDI</sequence>
<dbReference type="EC" id="3.5.3.6" evidence="1"/>
<dbReference type="EMBL" id="CP001186">
    <property type="protein sequence ID" value="ACK96658.1"/>
    <property type="molecule type" value="Genomic_DNA"/>
</dbReference>
<dbReference type="RefSeq" id="WP_000682331.1">
    <property type="nucleotide sequence ID" value="NC_011772.1"/>
</dbReference>
<dbReference type="SMR" id="B7IV32"/>
<dbReference type="GeneID" id="72447209"/>
<dbReference type="KEGG" id="bcg:BCG9842_B4898"/>
<dbReference type="HOGENOM" id="CLU_052662_0_1_9"/>
<dbReference type="UniPathway" id="UPA00254">
    <property type="reaction ID" value="UER00364"/>
</dbReference>
<dbReference type="Proteomes" id="UP000006744">
    <property type="component" value="Chromosome"/>
</dbReference>
<dbReference type="GO" id="GO:0005737">
    <property type="term" value="C:cytoplasm"/>
    <property type="evidence" value="ECO:0007669"/>
    <property type="project" value="UniProtKB-SubCell"/>
</dbReference>
<dbReference type="GO" id="GO:0016990">
    <property type="term" value="F:arginine deiminase activity"/>
    <property type="evidence" value="ECO:0007669"/>
    <property type="project" value="UniProtKB-UniRule"/>
</dbReference>
<dbReference type="GO" id="GO:0019547">
    <property type="term" value="P:arginine catabolic process to ornithine"/>
    <property type="evidence" value="ECO:0007669"/>
    <property type="project" value="UniProtKB-UniRule"/>
</dbReference>
<dbReference type="GO" id="GO:0019546">
    <property type="term" value="P:arginine deiminase pathway"/>
    <property type="evidence" value="ECO:0007669"/>
    <property type="project" value="TreeGrafter"/>
</dbReference>
<dbReference type="FunFam" id="1.10.3930.10:FF:000001">
    <property type="entry name" value="Arginine deiminase"/>
    <property type="match status" value="1"/>
</dbReference>
<dbReference type="Gene3D" id="1.10.3930.10">
    <property type="entry name" value="Arginine deiminase"/>
    <property type="match status" value="1"/>
</dbReference>
<dbReference type="Gene3D" id="3.75.10.10">
    <property type="entry name" value="L-arginine/glycine Amidinotransferase, Chain A"/>
    <property type="match status" value="1"/>
</dbReference>
<dbReference type="HAMAP" id="MF_00242">
    <property type="entry name" value="Arg_deiminase"/>
    <property type="match status" value="1"/>
</dbReference>
<dbReference type="InterPro" id="IPR003876">
    <property type="entry name" value="Arg_deiminase"/>
</dbReference>
<dbReference type="NCBIfam" id="TIGR01078">
    <property type="entry name" value="arcA"/>
    <property type="match status" value="1"/>
</dbReference>
<dbReference type="NCBIfam" id="NF002381">
    <property type="entry name" value="PRK01388.1"/>
    <property type="match status" value="1"/>
</dbReference>
<dbReference type="PANTHER" id="PTHR47271">
    <property type="entry name" value="ARGININE DEIMINASE"/>
    <property type="match status" value="1"/>
</dbReference>
<dbReference type="PANTHER" id="PTHR47271:SF2">
    <property type="entry name" value="ARGININE DEIMINASE"/>
    <property type="match status" value="1"/>
</dbReference>
<dbReference type="Pfam" id="PF02274">
    <property type="entry name" value="ADI"/>
    <property type="match status" value="1"/>
</dbReference>
<dbReference type="PIRSF" id="PIRSF006356">
    <property type="entry name" value="Arg_deiminase"/>
    <property type="match status" value="1"/>
</dbReference>
<dbReference type="PRINTS" id="PR01466">
    <property type="entry name" value="ARGDEIMINASE"/>
</dbReference>
<dbReference type="SUPFAM" id="SSF55909">
    <property type="entry name" value="Pentein"/>
    <property type="match status" value="1"/>
</dbReference>
<accession>B7IV32</accession>
<gene>
    <name evidence="1" type="primary">arcA</name>
    <name type="ordered locus">BCG9842_B4898</name>
</gene>
<reference key="1">
    <citation type="submission" date="2008-10" db="EMBL/GenBank/DDBJ databases">
        <title>Genome sequence of Bacillus cereus G9842.</title>
        <authorList>
            <person name="Dodson R.J."/>
            <person name="Durkin A.S."/>
            <person name="Rosovitz M.J."/>
            <person name="Rasko D.A."/>
            <person name="Hoffmaster A."/>
            <person name="Ravel J."/>
            <person name="Sutton G."/>
        </authorList>
    </citation>
    <scope>NUCLEOTIDE SEQUENCE [LARGE SCALE GENOMIC DNA]</scope>
    <source>
        <strain>G9842</strain>
    </source>
</reference>
<feature type="chain" id="PRO_1000119034" description="Arginine deiminase">
    <location>
        <begin position="1"/>
        <end position="410"/>
    </location>
</feature>
<feature type="active site" description="Amidino-cysteine intermediate" evidence="1">
    <location>
        <position position="400"/>
    </location>
</feature>
<comment type="catalytic activity">
    <reaction evidence="1">
        <text>L-arginine + H2O = L-citrulline + NH4(+)</text>
        <dbReference type="Rhea" id="RHEA:19597"/>
        <dbReference type="ChEBI" id="CHEBI:15377"/>
        <dbReference type="ChEBI" id="CHEBI:28938"/>
        <dbReference type="ChEBI" id="CHEBI:32682"/>
        <dbReference type="ChEBI" id="CHEBI:57743"/>
        <dbReference type="EC" id="3.5.3.6"/>
    </reaction>
</comment>
<comment type="pathway">
    <text evidence="1">Amino-acid degradation; L-arginine degradation via ADI pathway; carbamoyl phosphate from L-arginine: step 1/2.</text>
</comment>
<comment type="subcellular location">
    <subcellularLocation>
        <location evidence="1">Cytoplasm</location>
    </subcellularLocation>
</comment>
<comment type="similarity">
    <text evidence="1">Belongs to the arginine deiminase family.</text>
</comment>
<proteinExistence type="inferred from homology"/>
<name>ARCA_BACC2</name>
<keyword id="KW-0056">Arginine metabolism</keyword>
<keyword id="KW-0963">Cytoplasm</keyword>
<keyword id="KW-0378">Hydrolase</keyword>
<evidence type="ECO:0000255" key="1">
    <source>
        <dbReference type="HAMAP-Rule" id="MF_00242"/>
    </source>
</evidence>
<organism>
    <name type="scientific">Bacillus cereus (strain G9842)</name>
    <dbReference type="NCBI Taxonomy" id="405531"/>
    <lineage>
        <taxon>Bacteria</taxon>
        <taxon>Bacillati</taxon>
        <taxon>Bacillota</taxon>
        <taxon>Bacilli</taxon>
        <taxon>Bacillales</taxon>
        <taxon>Bacillaceae</taxon>
        <taxon>Bacillus</taxon>
        <taxon>Bacillus cereus group</taxon>
    </lineage>
</organism>
<protein>
    <recommendedName>
        <fullName evidence="1">Arginine deiminase</fullName>
        <shortName evidence="1">ADI</shortName>
        <ecNumber evidence="1">3.5.3.6</ecNumber>
    </recommendedName>
    <alternativeName>
        <fullName evidence="1">Arginine dihydrolase</fullName>
        <shortName evidence="1">AD</shortName>
    </alternativeName>
</protein>